<accession>Q7M424</accession>
<feature type="chain" id="PRO_0000052475" description="Globin">
    <location>
        <begin position="1"/>
        <end position="146"/>
    </location>
</feature>
<feature type="domain" description="Globin" evidence="1">
    <location>
        <begin position="1"/>
        <end position="146"/>
    </location>
</feature>
<feature type="binding site" description="distal binding residue" evidence="1">
    <location>
        <position position="65"/>
    </location>
    <ligand>
        <name>heme b</name>
        <dbReference type="ChEBI" id="CHEBI:60344"/>
    </ligand>
    <ligandPart>
        <name>Fe</name>
        <dbReference type="ChEBI" id="CHEBI:18248"/>
    </ligandPart>
</feature>
<feature type="binding site" description="proximal binding residue" evidence="1">
    <location>
        <position position="97"/>
    </location>
    <ligand>
        <name>heme b</name>
        <dbReference type="ChEBI" id="CHEBI:60344"/>
    </ligand>
    <ligandPart>
        <name>Fe</name>
        <dbReference type="ChEBI" id="CHEBI:18248"/>
    </ligandPart>
</feature>
<feature type="modified residue" description="N-acetylalanine" evidence="2">
    <location>
        <position position="1"/>
    </location>
</feature>
<proteinExistence type="evidence at protein level"/>
<sequence length="146" mass="15753">ALTEPQKTALKDSWKLLAGDGKTMMKSGALLFGLLFKSHPDTKKHFKHFDDATFATMDTGVGKAHGMAVFTGLGAFVSSIDDDACVNGLAKKLSRNHTARGITADDFKLLQGVFKTFLDEATGKKATNEHKAAWDALLTMLIKAHS</sequence>
<organism>
    <name type="scientific">Buccinum undatum</name>
    <name type="common">Common whelk</name>
    <dbReference type="NCBI Taxonomy" id="37541"/>
    <lineage>
        <taxon>Eukaryota</taxon>
        <taxon>Metazoa</taxon>
        <taxon>Spiralia</taxon>
        <taxon>Lophotrochozoa</taxon>
        <taxon>Mollusca</taxon>
        <taxon>Gastropoda</taxon>
        <taxon>Caenogastropoda</taxon>
        <taxon>Neogastropoda</taxon>
        <taxon>Buccinoidea</taxon>
        <taxon>Buccinidae</taxon>
        <taxon>Buccinum</taxon>
    </lineage>
</organism>
<evidence type="ECO:0000255" key="1">
    <source>
        <dbReference type="PROSITE-ProRule" id="PRU00238"/>
    </source>
</evidence>
<evidence type="ECO:0000269" key="2">
    <source>
    </source>
</evidence>
<reference key="1">
    <citation type="journal article" date="1994" name="Biochim. Biophys. Acta">
        <title>Amino-acid sequence of a cooperative, dimeric myoglobin from the gastropod mollusc, Buccinum undatum L.</title>
        <authorList>
            <person name="Wen D."/>
            <person name="Laursen R.A."/>
        </authorList>
    </citation>
    <scope>PROTEIN SEQUENCE</scope>
    <scope>SUBUNIT</scope>
    <scope>ACETYLATION AT ALA-1</scope>
</reference>
<comment type="subunit">
    <text evidence="2">Homodimer.</text>
</comment>
<comment type="similarity">
    <text evidence="1">Belongs to the globin family.</text>
</comment>
<dbReference type="PIR" id="S50176">
    <property type="entry name" value="S50176"/>
</dbReference>
<dbReference type="SMR" id="Q7M424"/>
<dbReference type="iPTMnet" id="Q7M424"/>
<dbReference type="GO" id="GO:0005576">
    <property type="term" value="C:extracellular region"/>
    <property type="evidence" value="ECO:0007669"/>
    <property type="project" value="InterPro"/>
</dbReference>
<dbReference type="GO" id="GO:0005833">
    <property type="term" value="C:hemoglobin complex"/>
    <property type="evidence" value="ECO:0007669"/>
    <property type="project" value="InterPro"/>
</dbReference>
<dbReference type="GO" id="GO:0020037">
    <property type="term" value="F:heme binding"/>
    <property type="evidence" value="ECO:0007669"/>
    <property type="project" value="InterPro"/>
</dbReference>
<dbReference type="GO" id="GO:0046872">
    <property type="term" value="F:metal ion binding"/>
    <property type="evidence" value="ECO:0007669"/>
    <property type="project" value="UniProtKB-KW"/>
</dbReference>
<dbReference type="GO" id="GO:0019825">
    <property type="term" value="F:oxygen binding"/>
    <property type="evidence" value="ECO:0007669"/>
    <property type="project" value="InterPro"/>
</dbReference>
<dbReference type="GO" id="GO:0005344">
    <property type="term" value="F:oxygen carrier activity"/>
    <property type="evidence" value="ECO:0007669"/>
    <property type="project" value="UniProtKB-KW"/>
</dbReference>
<dbReference type="CDD" id="cd01040">
    <property type="entry name" value="Mb-like"/>
    <property type="match status" value="1"/>
</dbReference>
<dbReference type="Gene3D" id="1.10.490.10">
    <property type="entry name" value="Globins"/>
    <property type="match status" value="1"/>
</dbReference>
<dbReference type="InterPro" id="IPR002336">
    <property type="entry name" value="Erythrocruorin"/>
</dbReference>
<dbReference type="InterPro" id="IPR000971">
    <property type="entry name" value="Globin"/>
</dbReference>
<dbReference type="InterPro" id="IPR009050">
    <property type="entry name" value="Globin-like_sf"/>
</dbReference>
<dbReference type="InterPro" id="IPR012292">
    <property type="entry name" value="Globin/Proto"/>
</dbReference>
<dbReference type="InterPro" id="IPR044399">
    <property type="entry name" value="Mb-like_M"/>
</dbReference>
<dbReference type="PANTHER" id="PTHR47217">
    <property type="entry name" value="GLOBIN-LIKE PROTEIN"/>
    <property type="match status" value="1"/>
</dbReference>
<dbReference type="PANTHER" id="PTHR47217:SF1">
    <property type="entry name" value="GLOBIN-LIKE PROTEIN"/>
    <property type="match status" value="1"/>
</dbReference>
<dbReference type="Pfam" id="PF00042">
    <property type="entry name" value="Globin"/>
    <property type="match status" value="1"/>
</dbReference>
<dbReference type="PRINTS" id="PR00611">
    <property type="entry name" value="ERYTHCRUORIN"/>
</dbReference>
<dbReference type="SUPFAM" id="SSF46458">
    <property type="entry name" value="Globin-like"/>
    <property type="match status" value="1"/>
</dbReference>
<dbReference type="PROSITE" id="PS01033">
    <property type="entry name" value="GLOBIN"/>
    <property type="match status" value="1"/>
</dbReference>
<name>GLB_BUCUU</name>
<protein>
    <recommendedName>
        <fullName>Globin</fullName>
    </recommendedName>
    <alternativeName>
        <fullName>Myoglobin</fullName>
    </alternativeName>
</protein>
<keyword id="KW-0007">Acetylation</keyword>
<keyword id="KW-0903">Direct protein sequencing</keyword>
<keyword id="KW-0349">Heme</keyword>
<keyword id="KW-0408">Iron</keyword>
<keyword id="KW-0479">Metal-binding</keyword>
<keyword id="KW-0514">Muscle protein</keyword>
<keyword id="KW-0561">Oxygen transport</keyword>
<keyword id="KW-0813">Transport</keyword>